<reference key="1">
    <citation type="journal article" date="2007" name="J. Bacteriol.">
        <title>The complete genome sequence of Bacillus thuringiensis Al Hakam.</title>
        <authorList>
            <person name="Challacombe J.F."/>
            <person name="Altherr M.R."/>
            <person name="Xie G."/>
            <person name="Bhotika S.S."/>
            <person name="Brown N."/>
            <person name="Bruce D."/>
            <person name="Campbell C.S."/>
            <person name="Campbell M.L."/>
            <person name="Chen J."/>
            <person name="Chertkov O."/>
            <person name="Cleland C."/>
            <person name="Dimitrijevic M."/>
            <person name="Doggett N.A."/>
            <person name="Fawcett J.J."/>
            <person name="Glavina T."/>
            <person name="Goodwin L.A."/>
            <person name="Green L.D."/>
            <person name="Han C.S."/>
            <person name="Hill K.K."/>
            <person name="Hitchcock P."/>
            <person name="Jackson P.J."/>
            <person name="Keim P."/>
            <person name="Kewalramani A.R."/>
            <person name="Longmire J."/>
            <person name="Lucas S."/>
            <person name="Malfatti S."/>
            <person name="Martinez D."/>
            <person name="McMurry K."/>
            <person name="Meincke L.J."/>
            <person name="Misra M."/>
            <person name="Moseman B.L."/>
            <person name="Mundt M."/>
            <person name="Munk A.C."/>
            <person name="Okinaka R.T."/>
            <person name="Parson-Quintana B."/>
            <person name="Reilly L.P."/>
            <person name="Richardson P."/>
            <person name="Robinson D.L."/>
            <person name="Saunders E."/>
            <person name="Tapia R."/>
            <person name="Tesmer J.G."/>
            <person name="Thayer N."/>
            <person name="Thompson L.S."/>
            <person name="Tice H."/>
            <person name="Ticknor L.O."/>
            <person name="Wills P.L."/>
            <person name="Gilna P."/>
            <person name="Brettin T.S."/>
        </authorList>
    </citation>
    <scope>NUCLEOTIDE SEQUENCE [LARGE SCALE GENOMIC DNA]</scope>
    <source>
        <strain>Al Hakam</strain>
    </source>
</reference>
<accession>A0RAQ6</accession>
<evidence type="ECO:0000255" key="1">
    <source>
        <dbReference type="HAMAP-Rule" id="MF_01911"/>
    </source>
</evidence>
<sequence length="185" mass="21733">MKSGEKDYSVKEAMIFSQRIAQLSKALWKCVEKDWQMWIKPYDLNINEHHILTIAYHLKGASISEIAKFGVMHVSTAFNFSKKLEERGYLVFSKKEDDKRNTYIEITDKGEELLLRLMEEYDPENNSVFNGALALRNFYGKFPENIELIAILRNIYGQDFIDIFEKSLEDIEENFTESDQKLVKK</sequence>
<protein>
    <recommendedName>
        <fullName evidence="1">HTH-type transcriptional regulator Hpr</fullName>
    </recommendedName>
    <alternativeName>
        <fullName evidence="1">Protease production regulatory protein Hpr</fullName>
    </alternativeName>
</protein>
<name>HPR_BACAH</name>
<organism>
    <name type="scientific">Bacillus thuringiensis (strain Al Hakam)</name>
    <dbReference type="NCBI Taxonomy" id="412694"/>
    <lineage>
        <taxon>Bacteria</taxon>
        <taxon>Bacillati</taxon>
        <taxon>Bacillota</taxon>
        <taxon>Bacilli</taxon>
        <taxon>Bacillales</taxon>
        <taxon>Bacillaceae</taxon>
        <taxon>Bacillus</taxon>
        <taxon>Bacillus cereus group</taxon>
    </lineage>
</organism>
<gene>
    <name evidence="1" type="primary">hpr</name>
    <name type="ordered locus">BALH_0933</name>
</gene>
<comment type="function">
    <text evidence="1">Negative regulator of protease production and sporulation.</text>
</comment>
<comment type="subunit">
    <text evidence="1">Homodimer.</text>
</comment>
<proteinExistence type="inferred from homology"/>
<keyword id="KW-0238">DNA-binding</keyword>
<keyword id="KW-0678">Repressor</keyword>
<keyword id="KW-0749">Sporulation</keyword>
<keyword id="KW-0804">Transcription</keyword>
<keyword id="KW-0805">Transcription regulation</keyword>
<feature type="chain" id="PRO_0000343626" description="HTH-type transcriptional regulator Hpr">
    <location>
        <begin position="1"/>
        <end position="185"/>
    </location>
</feature>
<feature type="domain" description="HTH marR-type" evidence="1">
    <location>
        <begin position="13"/>
        <end position="157"/>
    </location>
</feature>
<feature type="DNA-binding region" description="H-T-H motif" evidence="1">
    <location>
        <begin position="63"/>
        <end position="86"/>
    </location>
</feature>
<dbReference type="EMBL" id="CP000485">
    <property type="protein sequence ID" value="ABK84299.1"/>
    <property type="molecule type" value="Genomic_DNA"/>
</dbReference>
<dbReference type="RefSeq" id="WP_000834918.1">
    <property type="nucleotide sequence ID" value="NC_008600.1"/>
</dbReference>
<dbReference type="SMR" id="A0RAQ6"/>
<dbReference type="KEGG" id="btl:BALH_0933"/>
<dbReference type="HOGENOM" id="CLU_115790_0_0_9"/>
<dbReference type="GO" id="GO:0003677">
    <property type="term" value="F:DNA binding"/>
    <property type="evidence" value="ECO:0007669"/>
    <property type="project" value="UniProtKB-UniRule"/>
</dbReference>
<dbReference type="GO" id="GO:0003700">
    <property type="term" value="F:DNA-binding transcription factor activity"/>
    <property type="evidence" value="ECO:0007669"/>
    <property type="project" value="UniProtKB-UniRule"/>
</dbReference>
<dbReference type="GO" id="GO:0045892">
    <property type="term" value="P:negative regulation of DNA-templated transcription"/>
    <property type="evidence" value="ECO:0007669"/>
    <property type="project" value="UniProtKB-UniRule"/>
</dbReference>
<dbReference type="GO" id="GO:0006950">
    <property type="term" value="P:response to stress"/>
    <property type="evidence" value="ECO:0007669"/>
    <property type="project" value="TreeGrafter"/>
</dbReference>
<dbReference type="GO" id="GO:0030435">
    <property type="term" value="P:sporulation resulting in formation of a cellular spore"/>
    <property type="evidence" value="ECO:0007669"/>
    <property type="project" value="UniProtKB-UniRule"/>
</dbReference>
<dbReference type="FunFam" id="1.10.10.10:FF:000194">
    <property type="entry name" value="HTH-type transcriptional regulator Hpr"/>
    <property type="match status" value="1"/>
</dbReference>
<dbReference type="Gene3D" id="1.10.10.10">
    <property type="entry name" value="Winged helix-like DNA-binding domain superfamily/Winged helix DNA-binding domain"/>
    <property type="match status" value="1"/>
</dbReference>
<dbReference type="HAMAP" id="MF_01911">
    <property type="entry name" value="HTH_type_Hpr"/>
    <property type="match status" value="1"/>
</dbReference>
<dbReference type="InterPro" id="IPR000835">
    <property type="entry name" value="HTH_MarR-typ"/>
</dbReference>
<dbReference type="InterPro" id="IPR023488">
    <property type="entry name" value="HTH_tscrpt_reg_Hpr"/>
</dbReference>
<dbReference type="InterPro" id="IPR039422">
    <property type="entry name" value="MarR/SlyA-like"/>
</dbReference>
<dbReference type="InterPro" id="IPR023187">
    <property type="entry name" value="Tscrpt_reg_MarR-type_CS"/>
</dbReference>
<dbReference type="InterPro" id="IPR036388">
    <property type="entry name" value="WH-like_DNA-bd_sf"/>
</dbReference>
<dbReference type="InterPro" id="IPR036390">
    <property type="entry name" value="WH_DNA-bd_sf"/>
</dbReference>
<dbReference type="NCBIfam" id="NF010349">
    <property type="entry name" value="PRK13777.1"/>
    <property type="match status" value="1"/>
</dbReference>
<dbReference type="PANTHER" id="PTHR33164:SF58">
    <property type="entry name" value="DNA-BINDING TRANSCRIPTIONAL REPRESSOR SCOC"/>
    <property type="match status" value="1"/>
</dbReference>
<dbReference type="PANTHER" id="PTHR33164">
    <property type="entry name" value="TRANSCRIPTIONAL REGULATOR, MARR FAMILY"/>
    <property type="match status" value="1"/>
</dbReference>
<dbReference type="Pfam" id="PF01047">
    <property type="entry name" value="MarR"/>
    <property type="match status" value="1"/>
</dbReference>
<dbReference type="SMART" id="SM00347">
    <property type="entry name" value="HTH_MARR"/>
    <property type="match status" value="1"/>
</dbReference>
<dbReference type="SUPFAM" id="SSF46785">
    <property type="entry name" value="Winged helix' DNA-binding domain"/>
    <property type="match status" value="1"/>
</dbReference>
<dbReference type="PROSITE" id="PS01117">
    <property type="entry name" value="HTH_MARR_1"/>
    <property type="match status" value="1"/>
</dbReference>
<dbReference type="PROSITE" id="PS50995">
    <property type="entry name" value="HTH_MARR_2"/>
    <property type="match status" value="1"/>
</dbReference>